<keyword id="KW-0143">Chaperone</keyword>
<keyword id="KW-0574">Periplasm</keyword>
<keyword id="KW-0653">Protein transport</keyword>
<keyword id="KW-1185">Reference proteome</keyword>
<keyword id="KW-0732">Signal</keyword>
<keyword id="KW-0813">Transport</keyword>
<comment type="function">
    <text evidence="1">Participates in the translocation of lipoproteins from the inner membrane to the outer membrane. Only forms a complex with a lipoprotein if the residue after the N-terminal Cys is not an aspartate (The Asp acts as a targeting signal to indicate that the lipoprotein should stay in the inner membrane).</text>
</comment>
<comment type="subunit">
    <text evidence="1">Monomer.</text>
</comment>
<comment type="subcellular location">
    <subcellularLocation>
        <location evidence="1">Periplasm</location>
    </subcellularLocation>
</comment>
<comment type="similarity">
    <text evidence="1">Belongs to the LolA family.</text>
</comment>
<feature type="signal peptide" evidence="1">
    <location>
        <begin position="1"/>
        <end position="21"/>
    </location>
</feature>
<feature type="chain" id="PRO_0000018276" description="Outer-membrane lipoprotein carrier protein">
    <location>
        <begin position="22"/>
        <end position="206"/>
    </location>
</feature>
<protein>
    <recommendedName>
        <fullName evidence="1">Outer-membrane lipoprotein carrier protein</fullName>
    </recommendedName>
</protein>
<reference key="1">
    <citation type="journal article" date="2002" name="Nat. Biotechnol.">
        <title>Genome sequence of the dissimilatory metal ion-reducing bacterium Shewanella oneidensis.</title>
        <authorList>
            <person name="Heidelberg J.F."/>
            <person name="Paulsen I.T."/>
            <person name="Nelson K.E."/>
            <person name="Gaidos E.J."/>
            <person name="Nelson W.C."/>
            <person name="Read T.D."/>
            <person name="Eisen J.A."/>
            <person name="Seshadri R."/>
            <person name="Ward N.L."/>
            <person name="Methe B.A."/>
            <person name="Clayton R.A."/>
            <person name="Meyer T."/>
            <person name="Tsapin A."/>
            <person name="Scott J."/>
            <person name="Beanan M.J."/>
            <person name="Brinkac L.M."/>
            <person name="Daugherty S.C."/>
            <person name="DeBoy R.T."/>
            <person name="Dodson R.J."/>
            <person name="Durkin A.S."/>
            <person name="Haft D.H."/>
            <person name="Kolonay J.F."/>
            <person name="Madupu R."/>
            <person name="Peterson J.D."/>
            <person name="Umayam L.A."/>
            <person name="White O."/>
            <person name="Wolf A.M."/>
            <person name="Vamathevan J.J."/>
            <person name="Weidman J.F."/>
            <person name="Impraim M."/>
            <person name="Lee K."/>
            <person name="Berry K.J."/>
            <person name="Lee C."/>
            <person name="Mueller J."/>
            <person name="Khouri H.M."/>
            <person name="Gill J."/>
            <person name="Utterback T.R."/>
            <person name="McDonald L.A."/>
            <person name="Feldblyum T.V."/>
            <person name="Smith H.O."/>
            <person name="Venter J.C."/>
            <person name="Nealson K.H."/>
            <person name="Fraser C.M."/>
        </authorList>
    </citation>
    <scope>NUCLEOTIDE SEQUENCE [LARGE SCALE GENOMIC DNA]</scope>
    <source>
        <strain>ATCC 700550 / JCM 31522 / CIP 106686 / LMG 19005 / NCIMB 14063 / MR-1</strain>
    </source>
</reference>
<gene>
    <name evidence="1" type="primary">lolA</name>
    <name type="ordered locus">SO_2307</name>
</gene>
<evidence type="ECO:0000255" key="1">
    <source>
        <dbReference type="HAMAP-Rule" id="MF_00240"/>
    </source>
</evidence>
<name>LOLA_SHEON</name>
<dbReference type="EMBL" id="AE014299">
    <property type="protein sequence ID" value="AAN55346.1"/>
    <property type="molecule type" value="Genomic_DNA"/>
</dbReference>
<dbReference type="RefSeq" id="NP_717902.1">
    <property type="nucleotide sequence ID" value="NC_004347.2"/>
</dbReference>
<dbReference type="RefSeq" id="WP_011072307.1">
    <property type="nucleotide sequence ID" value="NC_004347.2"/>
</dbReference>
<dbReference type="SMR" id="Q8EER2"/>
<dbReference type="STRING" id="211586.SO_2307"/>
<dbReference type="PaxDb" id="211586-SO_2307"/>
<dbReference type="KEGG" id="son:SO_2307"/>
<dbReference type="PATRIC" id="fig|211586.12.peg.2222"/>
<dbReference type="eggNOG" id="COG2834">
    <property type="taxonomic scope" value="Bacteria"/>
</dbReference>
<dbReference type="HOGENOM" id="CLU_087560_1_1_6"/>
<dbReference type="OrthoDB" id="9787361at2"/>
<dbReference type="PhylomeDB" id="Q8EER2"/>
<dbReference type="BioCyc" id="SONE211586:G1GMP-2109-MONOMER"/>
<dbReference type="Proteomes" id="UP000008186">
    <property type="component" value="Chromosome"/>
</dbReference>
<dbReference type="GO" id="GO:0030288">
    <property type="term" value="C:outer membrane-bounded periplasmic space"/>
    <property type="evidence" value="ECO:0000318"/>
    <property type="project" value="GO_Central"/>
</dbReference>
<dbReference type="GO" id="GO:0044874">
    <property type="term" value="P:lipoprotein localization to outer membrane"/>
    <property type="evidence" value="ECO:0000318"/>
    <property type="project" value="GO_Central"/>
</dbReference>
<dbReference type="GO" id="GO:0042953">
    <property type="term" value="P:lipoprotein transport"/>
    <property type="evidence" value="ECO:0000318"/>
    <property type="project" value="GO_Central"/>
</dbReference>
<dbReference type="CDD" id="cd16325">
    <property type="entry name" value="LolA"/>
    <property type="match status" value="1"/>
</dbReference>
<dbReference type="Gene3D" id="2.50.20.10">
    <property type="entry name" value="Lipoprotein localisation LolA/LolB/LppX"/>
    <property type="match status" value="1"/>
</dbReference>
<dbReference type="HAMAP" id="MF_00240">
    <property type="entry name" value="LolA"/>
    <property type="match status" value="1"/>
</dbReference>
<dbReference type="InterPro" id="IPR029046">
    <property type="entry name" value="LolA/LolB/LppX"/>
</dbReference>
<dbReference type="InterPro" id="IPR004564">
    <property type="entry name" value="OM_lipoprot_carrier_LolA-like"/>
</dbReference>
<dbReference type="InterPro" id="IPR018323">
    <property type="entry name" value="OM_lipoprot_carrier_LolA_Pbac"/>
</dbReference>
<dbReference type="NCBIfam" id="TIGR00547">
    <property type="entry name" value="lolA"/>
    <property type="match status" value="1"/>
</dbReference>
<dbReference type="PANTHER" id="PTHR35869">
    <property type="entry name" value="OUTER-MEMBRANE LIPOPROTEIN CARRIER PROTEIN"/>
    <property type="match status" value="1"/>
</dbReference>
<dbReference type="PANTHER" id="PTHR35869:SF1">
    <property type="entry name" value="OUTER-MEMBRANE LIPOPROTEIN CARRIER PROTEIN"/>
    <property type="match status" value="1"/>
</dbReference>
<dbReference type="Pfam" id="PF03548">
    <property type="entry name" value="LolA"/>
    <property type="match status" value="1"/>
</dbReference>
<dbReference type="SUPFAM" id="SSF89392">
    <property type="entry name" value="Prokaryotic lipoproteins and lipoprotein localization factors"/>
    <property type="match status" value="1"/>
</dbReference>
<accession>Q8EER2</accession>
<organism>
    <name type="scientific">Shewanella oneidensis (strain ATCC 700550 / JCM 31522 / CIP 106686 / LMG 19005 / NCIMB 14063 / MR-1)</name>
    <dbReference type="NCBI Taxonomy" id="211586"/>
    <lineage>
        <taxon>Bacteria</taxon>
        <taxon>Pseudomonadati</taxon>
        <taxon>Pseudomonadota</taxon>
        <taxon>Gammaproteobacteria</taxon>
        <taxon>Alteromonadales</taxon>
        <taxon>Shewanellaceae</taxon>
        <taxon>Shewanella</taxon>
    </lineage>
</organism>
<proteinExistence type="inferred from homology"/>
<sequence>MKKLLCAVLLSPLLYSNAVLADDAKQLRETLTGTESLKADFKQTVTDVNKKVIQSGAGVFALAHPNQFYWHLTAPDESKIVADGKDLWIYNPFAEEVVIMDFTQAITASPIALLVHRDDATWSQYAVTKKQDCYEIKPKATDAGISAVNVCFNKGTLNKFNVLDDKGNLSQFDLSNQHSISTGDKALFKFVLPDNVDVDDQRIKTQ</sequence>